<feature type="chain" id="PRO_1000054462" description="Large ribosomal subunit protein uL15">
    <location>
        <begin position="1"/>
        <end position="143"/>
    </location>
</feature>
<feature type="region of interest" description="Disordered" evidence="2">
    <location>
        <begin position="1"/>
        <end position="52"/>
    </location>
</feature>
<feature type="compositionally biased region" description="Gly residues" evidence="2">
    <location>
        <begin position="21"/>
        <end position="31"/>
    </location>
</feature>
<keyword id="KW-0687">Ribonucleoprotein</keyword>
<keyword id="KW-0689">Ribosomal protein</keyword>
<keyword id="KW-0694">RNA-binding</keyword>
<keyword id="KW-0699">rRNA-binding</keyword>
<comment type="function">
    <text evidence="1">Binds to the 23S rRNA.</text>
</comment>
<comment type="subunit">
    <text evidence="1">Part of the 50S ribosomal subunit.</text>
</comment>
<comment type="similarity">
    <text evidence="1">Belongs to the universal ribosomal protein uL15 family.</text>
</comment>
<proteinExistence type="inferred from homology"/>
<organism>
    <name type="scientific">Francisella tularensis subsp. holarctica (strain FTNF002-00 / FTA)</name>
    <dbReference type="NCBI Taxonomy" id="458234"/>
    <lineage>
        <taxon>Bacteria</taxon>
        <taxon>Pseudomonadati</taxon>
        <taxon>Pseudomonadota</taxon>
        <taxon>Gammaproteobacteria</taxon>
        <taxon>Thiotrichales</taxon>
        <taxon>Francisellaceae</taxon>
        <taxon>Francisella</taxon>
    </lineage>
</organism>
<evidence type="ECO:0000255" key="1">
    <source>
        <dbReference type="HAMAP-Rule" id="MF_01341"/>
    </source>
</evidence>
<evidence type="ECO:0000256" key="2">
    <source>
        <dbReference type="SAM" id="MobiDB-lite"/>
    </source>
</evidence>
<evidence type="ECO:0000305" key="3"/>
<name>RL15_FRATF</name>
<accession>A7N9U4</accession>
<protein>
    <recommendedName>
        <fullName evidence="1">Large ribosomal subunit protein uL15</fullName>
    </recommendedName>
    <alternativeName>
        <fullName evidence="3">50S ribosomal protein L15</fullName>
    </alternativeName>
</protein>
<gene>
    <name evidence="1" type="primary">rplO</name>
    <name type="ordered locus">FTA_0270</name>
</gene>
<sequence length="143" mass="15096">MKLNTLAPAAGSKSAPKRLGRGIGSGLGKTSGKGHKGQKARSGGYHKVGFEGGQMPLQRRLPKFGFPSASKRYVAEIRLHELNNVVADEVTLDTLKDFGLIRKDIKTVKVIASGEIQKAVSLKGIACTKGAKEAIEKAGGKVE</sequence>
<reference key="1">
    <citation type="journal article" date="2009" name="PLoS ONE">
        <title>Complete genome sequence of Francisella tularensis subspecies holarctica FTNF002-00.</title>
        <authorList>
            <person name="Barabote R.D."/>
            <person name="Xie G."/>
            <person name="Brettin T.S."/>
            <person name="Hinrichs S.H."/>
            <person name="Fey P.D."/>
            <person name="Jay J.J."/>
            <person name="Engle J.L."/>
            <person name="Godbole S.D."/>
            <person name="Noronha J.M."/>
            <person name="Scheuermann R.H."/>
            <person name="Zhou L.W."/>
            <person name="Lion C."/>
            <person name="Dempsey M.P."/>
        </authorList>
    </citation>
    <scope>NUCLEOTIDE SEQUENCE [LARGE SCALE GENOMIC DNA]</scope>
    <source>
        <strain>FTNF002-00 / FTA</strain>
    </source>
</reference>
<dbReference type="EMBL" id="CP000803">
    <property type="protein sequence ID" value="ABU60747.1"/>
    <property type="molecule type" value="Genomic_DNA"/>
</dbReference>
<dbReference type="RefSeq" id="WP_003014365.1">
    <property type="nucleotide sequence ID" value="NC_009749.1"/>
</dbReference>
<dbReference type="SMR" id="A7N9U4"/>
<dbReference type="KEGG" id="fta:FTA_0270"/>
<dbReference type="HOGENOM" id="CLU_055188_4_2_6"/>
<dbReference type="GO" id="GO:0022625">
    <property type="term" value="C:cytosolic large ribosomal subunit"/>
    <property type="evidence" value="ECO:0007669"/>
    <property type="project" value="TreeGrafter"/>
</dbReference>
<dbReference type="GO" id="GO:0019843">
    <property type="term" value="F:rRNA binding"/>
    <property type="evidence" value="ECO:0007669"/>
    <property type="project" value="UniProtKB-UniRule"/>
</dbReference>
<dbReference type="GO" id="GO:0003735">
    <property type="term" value="F:structural constituent of ribosome"/>
    <property type="evidence" value="ECO:0007669"/>
    <property type="project" value="InterPro"/>
</dbReference>
<dbReference type="GO" id="GO:0006412">
    <property type="term" value="P:translation"/>
    <property type="evidence" value="ECO:0007669"/>
    <property type="project" value="UniProtKB-UniRule"/>
</dbReference>
<dbReference type="Gene3D" id="3.100.10.10">
    <property type="match status" value="1"/>
</dbReference>
<dbReference type="HAMAP" id="MF_01341">
    <property type="entry name" value="Ribosomal_uL15"/>
    <property type="match status" value="1"/>
</dbReference>
<dbReference type="InterPro" id="IPR030878">
    <property type="entry name" value="Ribosomal_uL15"/>
</dbReference>
<dbReference type="InterPro" id="IPR021131">
    <property type="entry name" value="Ribosomal_uL15/eL18"/>
</dbReference>
<dbReference type="InterPro" id="IPR036227">
    <property type="entry name" value="Ribosomal_uL15/eL18_sf"/>
</dbReference>
<dbReference type="InterPro" id="IPR005749">
    <property type="entry name" value="Ribosomal_uL15_bac-type"/>
</dbReference>
<dbReference type="InterPro" id="IPR001196">
    <property type="entry name" value="Ribosomal_uL15_CS"/>
</dbReference>
<dbReference type="NCBIfam" id="TIGR01071">
    <property type="entry name" value="rplO_bact"/>
    <property type="match status" value="1"/>
</dbReference>
<dbReference type="PANTHER" id="PTHR12934">
    <property type="entry name" value="50S RIBOSOMAL PROTEIN L15"/>
    <property type="match status" value="1"/>
</dbReference>
<dbReference type="PANTHER" id="PTHR12934:SF11">
    <property type="entry name" value="LARGE RIBOSOMAL SUBUNIT PROTEIN UL15M"/>
    <property type="match status" value="1"/>
</dbReference>
<dbReference type="Pfam" id="PF00828">
    <property type="entry name" value="Ribosomal_L27A"/>
    <property type="match status" value="1"/>
</dbReference>
<dbReference type="SUPFAM" id="SSF52080">
    <property type="entry name" value="Ribosomal proteins L15p and L18e"/>
    <property type="match status" value="1"/>
</dbReference>
<dbReference type="PROSITE" id="PS00475">
    <property type="entry name" value="RIBOSOMAL_L15"/>
    <property type="match status" value="1"/>
</dbReference>